<organism>
    <name type="scientific">Oenococcus oeni (strain ATCC BAA-331 / PSU-1)</name>
    <dbReference type="NCBI Taxonomy" id="203123"/>
    <lineage>
        <taxon>Bacteria</taxon>
        <taxon>Bacillati</taxon>
        <taxon>Bacillota</taxon>
        <taxon>Bacilli</taxon>
        <taxon>Lactobacillales</taxon>
        <taxon>Lactobacillaceae</taxon>
        <taxon>Oenococcus</taxon>
    </lineage>
</organism>
<protein>
    <recommendedName>
        <fullName evidence="1">Large ribosomal subunit protein uL30</fullName>
    </recommendedName>
    <alternativeName>
        <fullName evidence="2">50S ribosomal protein L30</fullName>
    </alternativeName>
</protein>
<comment type="subunit">
    <text evidence="1">Part of the 50S ribosomal subunit.</text>
</comment>
<comment type="similarity">
    <text evidence="1">Belongs to the universal ribosomal protein uL30 family.</text>
</comment>
<feature type="chain" id="PRO_1000056084" description="Large ribosomal subunit protein uL30">
    <location>
        <begin position="1"/>
        <end position="61"/>
    </location>
</feature>
<dbReference type="EMBL" id="CP000411">
    <property type="protein sequence ID" value="ABJ56554.1"/>
    <property type="molecule type" value="Genomic_DNA"/>
</dbReference>
<dbReference type="RefSeq" id="WP_002816353.1">
    <property type="nucleotide sequence ID" value="NC_008528.1"/>
</dbReference>
<dbReference type="SMR" id="Q04G68"/>
<dbReference type="STRING" id="203123.OEOE_0612"/>
<dbReference type="GeneID" id="75065434"/>
<dbReference type="KEGG" id="ooe:OEOE_0612"/>
<dbReference type="eggNOG" id="COG1841">
    <property type="taxonomic scope" value="Bacteria"/>
</dbReference>
<dbReference type="HOGENOM" id="CLU_131047_2_1_9"/>
<dbReference type="Proteomes" id="UP000000774">
    <property type="component" value="Chromosome"/>
</dbReference>
<dbReference type="GO" id="GO:0022625">
    <property type="term" value="C:cytosolic large ribosomal subunit"/>
    <property type="evidence" value="ECO:0007669"/>
    <property type="project" value="TreeGrafter"/>
</dbReference>
<dbReference type="GO" id="GO:0003735">
    <property type="term" value="F:structural constituent of ribosome"/>
    <property type="evidence" value="ECO:0007669"/>
    <property type="project" value="InterPro"/>
</dbReference>
<dbReference type="GO" id="GO:0006412">
    <property type="term" value="P:translation"/>
    <property type="evidence" value="ECO:0007669"/>
    <property type="project" value="UniProtKB-UniRule"/>
</dbReference>
<dbReference type="CDD" id="cd01658">
    <property type="entry name" value="Ribosomal_L30"/>
    <property type="match status" value="1"/>
</dbReference>
<dbReference type="Gene3D" id="3.30.1390.20">
    <property type="entry name" value="Ribosomal protein L30, ferredoxin-like fold domain"/>
    <property type="match status" value="1"/>
</dbReference>
<dbReference type="HAMAP" id="MF_01371_B">
    <property type="entry name" value="Ribosomal_uL30_B"/>
    <property type="match status" value="1"/>
</dbReference>
<dbReference type="InterPro" id="IPR036919">
    <property type="entry name" value="Ribo_uL30_ferredoxin-like_sf"/>
</dbReference>
<dbReference type="InterPro" id="IPR005996">
    <property type="entry name" value="Ribosomal_uL30_bac-type"/>
</dbReference>
<dbReference type="InterPro" id="IPR016082">
    <property type="entry name" value="Ribosomal_uL30_ferredoxin-like"/>
</dbReference>
<dbReference type="NCBIfam" id="TIGR01308">
    <property type="entry name" value="rpmD_bact"/>
    <property type="match status" value="1"/>
</dbReference>
<dbReference type="PANTHER" id="PTHR15892:SF2">
    <property type="entry name" value="LARGE RIBOSOMAL SUBUNIT PROTEIN UL30M"/>
    <property type="match status" value="1"/>
</dbReference>
<dbReference type="PANTHER" id="PTHR15892">
    <property type="entry name" value="MITOCHONDRIAL RIBOSOMAL PROTEIN L30"/>
    <property type="match status" value="1"/>
</dbReference>
<dbReference type="Pfam" id="PF00327">
    <property type="entry name" value="Ribosomal_L30"/>
    <property type="match status" value="1"/>
</dbReference>
<dbReference type="PIRSF" id="PIRSF002211">
    <property type="entry name" value="Ribosomal_L30_bac-type"/>
    <property type="match status" value="1"/>
</dbReference>
<dbReference type="SUPFAM" id="SSF55129">
    <property type="entry name" value="Ribosomal protein L30p/L7e"/>
    <property type="match status" value="1"/>
</dbReference>
<reference key="1">
    <citation type="journal article" date="2006" name="Proc. Natl. Acad. Sci. U.S.A.">
        <title>Comparative genomics of the lactic acid bacteria.</title>
        <authorList>
            <person name="Makarova K.S."/>
            <person name="Slesarev A."/>
            <person name="Wolf Y.I."/>
            <person name="Sorokin A."/>
            <person name="Mirkin B."/>
            <person name="Koonin E.V."/>
            <person name="Pavlov A."/>
            <person name="Pavlova N."/>
            <person name="Karamychev V."/>
            <person name="Polouchine N."/>
            <person name="Shakhova V."/>
            <person name="Grigoriev I."/>
            <person name="Lou Y."/>
            <person name="Rohksar D."/>
            <person name="Lucas S."/>
            <person name="Huang K."/>
            <person name="Goodstein D.M."/>
            <person name="Hawkins T."/>
            <person name="Plengvidhya V."/>
            <person name="Welker D."/>
            <person name="Hughes J."/>
            <person name="Goh Y."/>
            <person name="Benson A."/>
            <person name="Baldwin K."/>
            <person name="Lee J.-H."/>
            <person name="Diaz-Muniz I."/>
            <person name="Dosti B."/>
            <person name="Smeianov V."/>
            <person name="Wechter W."/>
            <person name="Barabote R."/>
            <person name="Lorca G."/>
            <person name="Altermann E."/>
            <person name="Barrangou R."/>
            <person name="Ganesan B."/>
            <person name="Xie Y."/>
            <person name="Rawsthorne H."/>
            <person name="Tamir D."/>
            <person name="Parker C."/>
            <person name="Breidt F."/>
            <person name="Broadbent J.R."/>
            <person name="Hutkins R."/>
            <person name="O'Sullivan D."/>
            <person name="Steele J."/>
            <person name="Unlu G."/>
            <person name="Saier M.H. Jr."/>
            <person name="Klaenhammer T."/>
            <person name="Richardson P."/>
            <person name="Kozyavkin S."/>
            <person name="Weimer B.C."/>
            <person name="Mills D.A."/>
        </authorList>
    </citation>
    <scope>NUCLEOTIDE SEQUENCE [LARGE SCALE GENOMIC DNA]</scope>
    <source>
        <strain>ATCC BAA-331 / PSU-1</strain>
    </source>
</reference>
<keyword id="KW-1185">Reference proteome</keyword>
<keyword id="KW-0687">Ribonucleoprotein</keyword>
<keyword id="KW-0689">Ribosomal protein</keyword>
<sequence length="61" mass="6799">MADLKITLIKSIVHREPRQREIAKSLGLGRVHSSVVRPDNAATRGIIFKIAHLVSVEEVNK</sequence>
<evidence type="ECO:0000255" key="1">
    <source>
        <dbReference type="HAMAP-Rule" id="MF_01371"/>
    </source>
</evidence>
<evidence type="ECO:0000305" key="2"/>
<proteinExistence type="inferred from homology"/>
<accession>Q04G68</accession>
<gene>
    <name evidence="1" type="primary">rpmD</name>
    <name type="ordered locus">OEOE_0612</name>
</gene>
<name>RL30_OENOB</name>